<reference key="1">
    <citation type="journal article" date="2003" name="Nucleic Acids Res.">
        <title>The complete nucleotide sequence of the hornwort (Anthoceros formosae) chloroplast genome: insight into the earliest land plants.</title>
        <authorList>
            <person name="Kugita M."/>
            <person name="Kaneko A."/>
            <person name="Yamamoto Y."/>
            <person name="Takeya Y."/>
            <person name="Matsumoto T."/>
            <person name="Yoshinaga K."/>
        </authorList>
    </citation>
    <scope>NUCLEOTIDE SEQUENCE [LARGE SCALE GENOMIC DNA]</scope>
</reference>
<reference key="2">
    <citation type="journal article" date="2003" name="Nucleic Acids Res.">
        <title>RNA editing in hornwort chloroplasts makes more than half the genes functional.</title>
        <authorList>
            <person name="Kugita M."/>
            <person name="Yamamoto Y."/>
            <person name="Fujikawa T."/>
            <person name="Matsumoto T."/>
            <person name="Yoshinaga K."/>
        </authorList>
    </citation>
    <scope>NUCLEOTIDE SEQUENCE [MRNA]</scope>
    <scope>ABSENCE OF RNA EDITING</scope>
    <source>
        <tissue>Thallus</tissue>
    </source>
</reference>
<name>YCX2_ANTAG</name>
<feature type="chain" id="PRO_0000217425" description="Uncharacterized 3.0 kDa protein in psbT-psbN intergenic region">
    <location>
        <begin position="1"/>
        <end position="27"/>
    </location>
</feature>
<geneLocation type="chloroplast"/>
<comment type="subcellular location">
    <subcellularLocation>
        <location>Plastid</location>
        <location>Chloroplast</location>
    </subcellularLocation>
</comment>
<sequence>MLFKKISKFVGWLSGSSVGSITSKTHE</sequence>
<keyword id="KW-0150">Chloroplast</keyword>
<keyword id="KW-0934">Plastid</keyword>
<protein>
    <recommendedName>
        <fullName>Uncharacterized 3.0 kDa protein in psbT-psbN intergenic region</fullName>
    </recommendedName>
    <alternativeName>
        <fullName>ORF27</fullName>
    </alternativeName>
</protein>
<dbReference type="EMBL" id="AB086179">
    <property type="protein sequence ID" value="BAC55377.1"/>
    <property type="molecule type" value="Genomic_DNA"/>
</dbReference>
<dbReference type="EMBL" id="AB087463">
    <property type="protein sequence ID" value="BAC55474.1"/>
    <property type="molecule type" value="mRNA"/>
</dbReference>
<dbReference type="RefSeq" id="NP_777441.1">
    <property type="nucleotide sequence ID" value="NC_004543.1"/>
</dbReference>
<dbReference type="GeneID" id="2553506"/>
<dbReference type="GO" id="GO:0009507">
    <property type="term" value="C:chloroplast"/>
    <property type="evidence" value="ECO:0007669"/>
    <property type="project" value="UniProtKB-SubCell"/>
</dbReference>
<proteinExistence type="evidence at transcript level"/>
<organism>
    <name type="scientific">Anthoceros angustus</name>
    <name type="common">Hornwort</name>
    <name type="synonym">Anthoceros formosae</name>
    <dbReference type="NCBI Taxonomy" id="48387"/>
    <lineage>
        <taxon>Eukaryota</taxon>
        <taxon>Viridiplantae</taxon>
        <taxon>Streptophyta</taxon>
        <taxon>Embryophyta</taxon>
        <taxon>Anthocerotophyta</taxon>
        <taxon>Anthocerotopsida</taxon>
        <taxon>Anthocerotidae</taxon>
        <taxon>Anthocerotales</taxon>
        <taxon>Anthocerotaceae</taxon>
        <taxon>Anthoceros</taxon>
    </lineage>
</organism>
<accession>Q85BU5</accession>